<proteinExistence type="evidence at transcript level"/>
<organism>
    <name type="scientific">Mus musculus</name>
    <name type="common">Mouse</name>
    <dbReference type="NCBI Taxonomy" id="10090"/>
    <lineage>
        <taxon>Eukaryota</taxon>
        <taxon>Metazoa</taxon>
        <taxon>Chordata</taxon>
        <taxon>Craniata</taxon>
        <taxon>Vertebrata</taxon>
        <taxon>Euteleostomi</taxon>
        <taxon>Mammalia</taxon>
        <taxon>Eutheria</taxon>
        <taxon>Euarchontoglires</taxon>
        <taxon>Glires</taxon>
        <taxon>Rodentia</taxon>
        <taxon>Myomorpha</taxon>
        <taxon>Muroidea</taxon>
        <taxon>Muridae</taxon>
        <taxon>Murinae</taxon>
        <taxon>Mus</taxon>
        <taxon>Mus</taxon>
    </lineage>
</organism>
<comment type="function">
    <text>Does not have a catalytic activity.</text>
</comment>
<comment type="subcellular location">
    <subcellularLocation>
        <location evidence="4">Secreted</location>
    </subcellularLocation>
</comment>
<comment type="similarity">
    <text evidence="4">Belongs to the alpha-carbonic anhydrase family.</text>
</comment>
<accession>O70354</accession>
<accession>Q8VEA9</accession>
<gene>
    <name type="primary">Ca11</name>
    <name type="synonym">Car11</name>
    <name type="synonym">Carp2</name>
</gene>
<keyword id="KW-0325">Glycoprotein</keyword>
<keyword id="KW-1185">Reference proteome</keyword>
<keyword id="KW-0964">Secreted</keyword>
<keyword id="KW-0732">Signal</keyword>
<feature type="signal peptide" evidence="1">
    <location>
        <begin position="1"/>
        <end position="23"/>
    </location>
</feature>
<feature type="chain" id="PRO_0000004246" description="Carbonic anhydrase-related protein 11">
    <location>
        <begin position="24"/>
        <end position="328"/>
    </location>
</feature>
<feature type="domain" description="Alpha-carbonic anhydrase" evidence="2">
    <location>
        <begin position="33"/>
        <end position="303"/>
    </location>
</feature>
<feature type="region of interest" description="Disordered" evidence="3">
    <location>
        <begin position="300"/>
        <end position="328"/>
    </location>
</feature>
<feature type="compositionally biased region" description="Basic and acidic residues" evidence="3">
    <location>
        <begin position="319"/>
        <end position="328"/>
    </location>
</feature>
<feature type="glycosylation site" description="N-linked (GlcNAc...) asparagine" evidence="1">
    <location>
        <position position="118"/>
    </location>
</feature>
<dbReference type="EMBL" id="AB079601">
    <property type="protein sequence ID" value="BAC07262.1"/>
    <property type="molecule type" value="mRNA"/>
</dbReference>
<dbReference type="EMBL" id="BC019393">
    <property type="protein sequence ID" value="AAH19393.1"/>
    <property type="molecule type" value="mRNA"/>
</dbReference>
<dbReference type="EMBL" id="AF050105">
    <property type="protein sequence ID" value="AAD08801.1"/>
    <property type="molecule type" value="mRNA"/>
</dbReference>
<dbReference type="CCDS" id="CCDS21259.1"/>
<dbReference type="RefSeq" id="NP_033930.1">
    <property type="nucleotide sequence ID" value="NM_009800.4"/>
</dbReference>
<dbReference type="SMR" id="O70354"/>
<dbReference type="FunCoup" id="O70354">
    <property type="interactions" value="68"/>
</dbReference>
<dbReference type="STRING" id="10090.ENSMUSP00000003360"/>
<dbReference type="GlyConnect" id="2183">
    <property type="glycosylation" value="4 N-Linked glycans (2 sites)"/>
</dbReference>
<dbReference type="GlyCosmos" id="O70354">
    <property type="glycosylation" value="2 sites, 4 glycans"/>
</dbReference>
<dbReference type="GlyGen" id="O70354">
    <property type="glycosylation" value="3 sites, 7 N-linked glycans (3 sites)"/>
</dbReference>
<dbReference type="iPTMnet" id="O70354"/>
<dbReference type="PhosphoSitePlus" id="O70354"/>
<dbReference type="PaxDb" id="10090-ENSMUSP00000003360"/>
<dbReference type="ProteomicsDB" id="273896"/>
<dbReference type="Antibodypedia" id="31755">
    <property type="antibodies" value="112 antibodies from 24 providers"/>
</dbReference>
<dbReference type="DNASU" id="12348"/>
<dbReference type="Ensembl" id="ENSMUST00000003360.10">
    <property type="protein sequence ID" value="ENSMUSP00000003360.8"/>
    <property type="gene ID" value="ENSMUSG00000003273.15"/>
</dbReference>
<dbReference type="GeneID" id="12348"/>
<dbReference type="KEGG" id="mmu:12348"/>
<dbReference type="UCSC" id="uc009gwr.1">
    <property type="organism name" value="mouse"/>
</dbReference>
<dbReference type="AGR" id="MGI:1336193"/>
<dbReference type="CTD" id="12348"/>
<dbReference type="MGI" id="MGI:1336193">
    <property type="gene designation" value="Car11"/>
</dbReference>
<dbReference type="VEuPathDB" id="HostDB:ENSMUSG00000003273"/>
<dbReference type="eggNOG" id="KOG0382">
    <property type="taxonomic scope" value="Eukaryota"/>
</dbReference>
<dbReference type="GeneTree" id="ENSGT00940000162098"/>
<dbReference type="HOGENOM" id="CLU_039326_7_0_1"/>
<dbReference type="InParanoid" id="O70354"/>
<dbReference type="OMA" id="HKNQNAC"/>
<dbReference type="OrthoDB" id="5978072at2759"/>
<dbReference type="PhylomeDB" id="O70354"/>
<dbReference type="TreeFam" id="TF352926"/>
<dbReference type="BioGRID-ORCS" id="12348">
    <property type="hits" value="1 hit in 78 CRISPR screens"/>
</dbReference>
<dbReference type="PRO" id="PR:O70354"/>
<dbReference type="Proteomes" id="UP000000589">
    <property type="component" value="Chromosome 7"/>
</dbReference>
<dbReference type="RNAct" id="O70354">
    <property type="molecule type" value="protein"/>
</dbReference>
<dbReference type="Bgee" id="ENSMUSG00000003273">
    <property type="expression patterns" value="Expressed in superior frontal gyrus and 181 other cell types or tissues"/>
</dbReference>
<dbReference type="ExpressionAtlas" id="O70354">
    <property type="expression patterns" value="baseline and differential"/>
</dbReference>
<dbReference type="GO" id="GO:0016323">
    <property type="term" value="C:basolateral plasma membrane"/>
    <property type="evidence" value="ECO:0000314"/>
    <property type="project" value="UniProtKB"/>
</dbReference>
<dbReference type="GO" id="GO:0005576">
    <property type="term" value="C:extracellular region"/>
    <property type="evidence" value="ECO:0007669"/>
    <property type="project" value="UniProtKB-SubCell"/>
</dbReference>
<dbReference type="GO" id="GO:0008270">
    <property type="term" value="F:zinc ion binding"/>
    <property type="evidence" value="ECO:0007669"/>
    <property type="project" value="InterPro"/>
</dbReference>
<dbReference type="CDD" id="cd03121">
    <property type="entry name" value="alpha_CARP_X_XI_like"/>
    <property type="match status" value="1"/>
</dbReference>
<dbReference type="FunFam" id="3.10.200.10:FF:000002">
    <property type="entry name" value="Carbonic anhydrase-related protein 10"/>
    <property type="match status" value="1"/>
</dbReference>
<dbReference type="Gene3D" id="3.10.200.10">
    <property type="entry name" value="Alpha carbonic anhydrase"/>
    <property type="match status" value="1"/>
</dbReference>
<dbReference type="InterPro" id="IPR041878">
    <property type="entry name" value="Alpha_CARP_X/XI"/>
</dbReference>
<dbReference type="InterPro" id="IPR001148">
    <property type="entry name" value="CA_dom"/>
</dbReference>
<dbReference type="InterPro" id="IPR036398">
    <property type="entry name" value="CA_dom_sf"/>
</dbReference>
<dbReference type="InterPro" id="IPR023561">
    <property type="entry name" value="Carbonic_anhydrase_a-class"/>
</dbReference>
<dbReference type="PANTHER" id="PTHR18952">
    <property type="entry name" value="CARBONIC ANHYDRASE"/>
    <property type="match status" value="1"/>
</dbReference>
<dbReference type="PANTHER" id="PTHR18952:SF93">
    <property type="entry name" value="CARBONIC ANHYDRASE-RELATED PROTEIN 11"/>
    <property type="match status" value="1"/>
</dbReference>
<dbReference type="Pfam" id="PF00194">
    <property type="entry name" value="Carb_anhydrase"/>
    <property type="match status" value="1"/>
</dbReference>
<dbReference type="SMART" id="SM01057">
    <property type="entry name" value="Carb_anhydrase"/>
    <property type="match status" value="1"/>
</dbReference>
<dbReference type="SUPFAM" id="SSF51069">
    <property type="entry name" value="Carbonic anhydrase"/>
    <property type="match status" value="1"/>
</dbReference>
<dbReference type="PROSITE" id="PS51144">
    <property type="entry name" value="ALPHA_CA_2"/>
    <property type="match status" value="1"/>
</dbReference>
<protein>
    <recommendedName>
        <fullName>Carbonic anhydrase-related protein 11</fullName>
    </recommendedName>
    <alternativeName>
        <fullName>CA-RP XI</fullName>
        <shortName>CA-XI</shortName>
        <shortName>CARP XI</shortName>
    </alternativeName>
    <alternativeName>
        <fullName>Carbonic anhydrase-related protein 2</fullName>
        <shortName>CA-RP II</shortName>
        <shortName>CARP-2</shortName>
    </alternativeName>
</protein>
<sequence length="328" mass="36051">MGGAARLSAPQALVLWAALGAAAHIGPAPDPEDWWSYKENLQGNFVPGPPFWGLVNAAWSLCAVGKRQSPVDVELKRVLYDPFLPPLRLSTGGEKLRGTLYNTGRHVSFLPASRPVVNVSGGPLLYSHRLSELRLLFGARDGAGSEHQINHEGFSAEVQLIHFNQELYGNLSAASRGPNGLAILSLFVNVAGSSNPFLSRLLNRDTITRISYKNDAYFLQDLSLELLFPESFGFITYQGSLSTPPCSETVTWILIDRALNITSLQMHSLRLLSQNPPSQIFQSLSGNGRPLQPLAHRALRGNRDPRHPERRCRGPNYRLHVDGGPHGR</sequence>
<reference key="1">
    <citation type="submission" date="2002-02" db="EMBL/GenBank/DDBJ databases">
        <title>A novel CA-RP XI gene.</title>
        <authorList>
            <person name="Taniuchi K."/>
            <person name="Nishimori I."/>
        </authorList>
    </citation>
    <scope>NUCLEOTIDE SEQUENCE [MRNA]</scope>
</reference>
<reference key="2">
    <citation type="journal article" date="2004" name="Genome Res.">
        <title>The status, quality, and expansion of the NIH full-length cDNA project: the Mammalian Gene Collection (MGC).</title>
        <authorList>
            <consortium name="The MGC Project Team"/>
        </authorList>
    </citation>
    <scope>NUCLEOTIDE SEQUENCE [LARGE SCALE MRNA]</scope>
</reference>
<reference key="3">
    <citation type="journal article" date="1998" name="Genomics">
        <title>Evolutionarily conserved, 'acatalytic' carbonic anhydrase-related protein XI contains a sequence motif present in the neuropeptide sauvagine: the human CA-RP XI gene (CA11) is embedded between the secretor gene cluster and the DBP gene at 19q13.3.</title>
        <authorList>
            <person name="Lovejoy D.A."/>
            <person name="Hewett-Emmett D."/>
            <person name="Porter C.A."/>
            <person name="Cepoi D."/>
            <person name="Sheffield A."/>
            <person name="Vale W.W."/>
            <person name="Tashian R.E."/>
        </authorList>
    </citation>
    <scope>NUCLEOTIDE SEQUENCE [MRNA] OF 48-251</scope>
    <source>
        <tissue>Brain</tissue>
    </source>
</reference>
<evidence type="ECO:0000255" key="1"/>
<evidence type="ECO:0000255" key="2">
    <source>
        <dbReference type="PROSITE-ProRule" id="PRU01134"/>
    </source>
</evidence>
<evidence type="ECO:0000256" key="3">
    <source>
        <dbReference type="SAM" id="MobiDB-lite"/>
    </source>
</evidence>
<evidence type="ECO:0000305" key="4"/>
<name>CAH11_MOUSE</name>